<accession>B7M143</accession>
<comment type="function">
    <text evidence="1">Cell division factor that enhances FtsZ-ring assembly. Directly interacts with FtsZ and promotes bundling of FtsZ protofilaments, with a reduction in FtsZ GTPase activity.</text>
</comment>
<comment type="subunit">
    <text evidence="1">Interacts with FtsZ.</text>
</comment>
<comment type="subcellular location">
    <subcellularLocation>
        <location evidence="1">Cytoplasm</location>
    </subcellularLocation>
    <text evidence="1">Localizes to mid-cell in an FtsZ-dependent manner.</text>
</comment>
<comment type="similarity">
    <text evidence="1">Belongs to the ZapD family.</text>
</comment>
<keyword id="KW-0131">Cell cycle</keyword>
<keyword id="KW-0132">Cell division</keyword>
<keyword id="KW-0963">Cytoplasm</keyword>
<keyword id="KW-0717">Septation</keyword>
<reference key="1">
    <citation type="journal article" date="2009" name="PLoS Genet.">
        <title>Organised genome dynamics in the Escherichia coli species results in highly diverse adaptive paths.</title>
        <authorList>
            <person name="Touchon M."/>
            <person name="Hoede C."/>
            <person name="Tenaillon O."/>
            <person name="Barbe V."/>
            <person name="Baeriswyl S."/>
            <person name="Bidet P."/>
            <person name="Bingen E."/>
            <person name="Bonacorsi S."/>
            <person name="Bouchier C."/>
            <person name="Bouvet O."/>
            <person name="Calteau A."/>
            <person name="Chiapello H."/>
            <person name="Clermont O."/>
            <person name="Cruveiller S."/>
            <person name="Danchin A."/>
            <person name="Diard M."/>
            <person name="Dossat C."/>
            <person name="Karoui M.E."/>
            <person name="Frapy E."/>
            <person name="Garry L."/>
            <person name="Ghigo J.M."/>
            <person name="Gilles A.M."/>
            <person name="Johnson J."/>
            <person name="Le Bouguenec C."/>
            <person name="Lescat M."/>
            <person name="Mangenot S."/>
            <person name="Martinez-Jehanne V."/>
            <person name="Matic I."/>
            <person name="Nassif X."/>
            <person name="Oztas S."/>
            <person name="Petit M.A."/>
            <person name="Pichon C."/>
            <person name="Rouy Z."/>
            <person name="Ruf C.S."/>
            <person name="Schneider D."/>
            <person name="Tourret J."/>
            <person name="Vacherie B."/>
            <person name="Vallenet D."/>
            <person name="Medigue C."/>
            <person name="Rocha E.P.C."/>
            <person name="Denamur E."/>
        </authorList>
    </citation>
    <scope>NUCLEOTIDE SEQUENCE [LARGE SCALE GENOMIC DNA]</scope>
    <source>
        <strain>IAI1</strain>
    </source>
</reference>
<organism>
    <name type="scientific">Escherichia coli O8 (strain IAI1)</name>
    <dbReference type="NCBI Taxonomy" id="585034"/>
    <lineage>
        <taxon>Bacteria</taxon>
        <taxon>Pseudomonadati</taxon>
        <taxon>Pseudomonadota</taxon>
        <taxon>Gammaproteobacteria</taxon>
        <taxon>Enterobacterales</taxon>
        <taxon>Enterobacteriaceae</taxon>
        <taxon>Escherichia</taxon>
    </lineage>
</organism>
<feature type="chain" id="PRO_1000136938" description="Cell division protein ZapD">
    <location>
        <begin position="1"/>
        <end position="247"/>
    </location>
</feature>
<dbReference type="EMBL" id="CU928160">
    <property type="protein sequence ID" value="CAQ96989.1"/>
    <property type="molecule type" value="Genomic_DNA"/>
</dbReference>
<dbReference type="RefSeq" id="WP_001194734.1">
    <property type="nucleotide sequence ID" value="NC_011741.1"/>
</dbReference>
<dbReference type="SMR" id="B7M143"/>
<dbReference type="GeneID" id="93777333"/>
<dbReference type="KEGG" id="ecr:ECIAI1_0100"/>
<dbReference type="HOGENOM" id="CLU_076303_0_0_6"/>
<dbReference type="GO" id="GO:0032153">
    <property type="term" value="C:cell division site"/>
    <property type="evidence" value="ECO:0007669"/>
    <property type="project" value="TreeGrafter"/>
</dbReference>
<dbReference type="GO" id="GO:0005737">
    <property type="term" value="C:cytoplasm"/>
    <property type="evidence" value="ECO:0007669"/>
    <property type="project" value="UniProtKB-SubCell"/>
</dbReference>
<dbReference type="GO" id="GO:0000917">
    <property type="term" value="P:division septum assembly"/>
    <property type="evidence" value="ECO:0007669"/>
    <property type="project" value="UniProtKB-KW"/>
</dbReference>
<dbReference type="GO" id="GO:0043093">
    <property type="term" value="P:FtsZ-dependent cytokinesis"/>
    <property type="evidence" value="ECO:0007669"/>
    <property type="project" value="UniProtKB-UniRule"/>
</dbReference>
<dbReference type="FunFam" id="1.10.3900.10:FF:000001">
    <property type="entry name" value="Cell division protein ZapD"/>
    <property type="match status" value="1"/>
</dbReference>
<dbReference type="FunFam" id="2.60.440.10:FF:000001">
    <property type="entry name" value="Cell division protein ZapD"/>
    <property type="match status" value="1"/>
</dbReference>
<dbReference type="Gene3D" id="1.10.3900.10">
    <property type="entry name" value="YacF-like"/>
    <property type="match status" value="1"/>
</dbReference>
<dbReference type="Gene3D" id="2.60.440.10">
    <property type="entry name" value="YacF-like domains"/>
    <property type="match status" value="1"/>
</dbReference>
<dbReference type="HAMAP" id="MF_01092">
    <property type="entry name" value="ZapD"/>
    <property type="match status" value="1"/>
</dbReference>
<dbReference type="InterPro" id="IPR009777">
    <property type="entry name" value="ZapD"/>
</dbReference>
<dbReference type="InterPro" id="IPR027462">
    <property type="entry name" value="ZapD_C"/>
</dbReference>
<dbReference type="InterPro" id="IPR036268">
    <property type="entry name" value="ZapD_sf"/>
</dbReference>
<dbReference type="NCBIfam" id="NF003653">
    <property type="entry name" value="PRK05287.1-1"/>
    <property type="match status" value="1"/>
</dbReference>
<dbReference type="NCBIfam" id="NF003655">
    <property type="entry name" value="PRK05287.1-3"/>
    <property type="match status" value="1"/>
</dbReference>
<dbReference type="PANTHER" id="PTHR39455">
    <property type="entry name" value="CELL DIVISION PROTEIN ZAPD"/>
    <property type="match status" value="1"/>
</dbReference>
<dbReference type="PANTHER" id="PTHR39455:SF1">
    <property type="entry name" value="CELL DIVISION PROTEIN ZAPD"/>
    <property type="match status" value="1"/>
</dbReference>
<dbReference type="Pfam" id="PF07072">
    <property type="entry name" value="ZapD"/>
    <property type="match status" value="1"/>
</dbReference>
<dbReference type="SUPFAM" id="SSF160950">
    <property type="entry name" value="YacF-like"/>
    <property type="match status" value="1"/>
</dbReference>
<evidence type="ECO:0000255" key="1">
    <source>
        <dbReference type="HAMAP-Rule" id="MF_01092"/>
    </source>
</evidence>
<sequence length="247" mass="28292">MQTQVLFEHPLNEKMRTWLRIEFLIQQLTVNLPIVDHAGALHFFRNVSELLDVFERGEVRTELLKELDRQQRKLQTWIGVPGVDQSRIEALIQQLKAAGSVLISAPRIGQFLREDRLIALVRQRLSIPGGCCSFDLPTLHIWLHLPQAQRDSQVETWIASLNPLTQALTMVLDLIRQSAPFRKQTSLNGFYQDNGGDADLLRLNLSLDSQLYPQISGHKSRFAIRFMPLDTENGQVPERLDFELACC</sequence>
<proteinExistence type="inferred from homology"/>
<name>ZAPD_ECO8A</name>
<gene>
    <name evidence="1" type="primary">zapD</name>
    <name type="ordered locus">ECIAI1_0100</name>
</gene>
<protein>
    <recommendedName>
        <fullName evidence="1">Cell division protein ZapD</fullName>
    </recommendedName>
    <alternativeName>
        <fullName evidence="1">Z ring-associated protein D</fullName>
    </alternativeName>
</protein>